<organism>
    <name type="scientific">Aspergillus terreus (strain NIH 2624 / FGSC A1156)</name>
    <dbReference type="NCBI Taxonomy" id="341663"/>
    <lineage>
        <taxon>Eukaryota</taxon>
        <taxon>Fungi</taxon>
        <taxon>Dikarya</taxon>
        <taxon>Ascomycota</taxon>
        <taxon>Pezizomycotina</taxon>
        <taxon>Eurotiomycetes</taxon>
        <taxon>Eurotiomycetidae</taxon>
        <taxon>Eurotiales</taxon>
        <taxon>Aspergillaceae</taxon>
        <taxon>Aspergillus</taxon>
        <taxon>Aspergillus subgen. Circumdati</taxon>
    </lineage>
</organism>
<reference key="1">
    <citation type="submission" date="2005-09" db="EMBL/GenBank/DDBJ databases">
        <title>Annotation of the Aspergillus terreus NIH2624 genome.</title>
        <authorList>
            <person name="Birren B.W."/>
            <person name="Lander E.S."/>
            <person name="Galagan J.E."/>
            <person name="Nusbaum C."/>
            <person name="Devon K."/>
            <person name="Henn M."/>
            <person name="Ma L.-J."/>
            <person name="Jaffe D.B."/>
            <person name="Butler J."/>
            <person name="Alvarez P."/>
            <person name="Gnerre S."/>
            <person name="Grabherr M."/>
            <person name="Kleber M."/>
            <person name="Mauceli E.W."/>
            <person name="Brockman W."/>
            <person name="Rounsley S."/>
            <person name="Young S.K."/>
            <person name="LaButti K."/>
            <person name="Pushparaj V."/>
            <person name="DeCaprio D."/>
            <person name="Crawford M."/>
            <person name="Koehrsen M."/>
            <person name="Engels R."/>
            <person name="Montgomery P."/>
            <person name="Pearson M."/>
            <person name="Howarth C."/>
            <person name="Larson L."/>
            <person name="Luoma S."/>
            <person name="White J."/>
            <person name="Alvarado L."/>
            <person name="Kodira C.D."/>
            <person name="Zeng Q."/>
            <person name="Oleary S."/>
            <person name="Yandava C."/>
            <person name="Denning D.W."/>
            <person name="Nierman W.C."/>
            <person name="Milne T."/>
            <person name="Madden K."/>
        </authorList>
    </citation>
    <scope>NUCLEOTIDE SEQUENCE [LARGE SCALE GENOMIC DNA]</scope>
    <source>
        <strain>NIH 2624 / FGSC A1156</strain>
    </source>
</reference>
<evidence type="ECO:0000250" key="1"/>
<evidence type="ECO:0000255" key="2">
    <source>
        <dbReference type="PROSITE-ProRule" id="PRU00227"/>
    </source>
</evidence>
<evidence type="ECO:0000256" key="3">
    <source>
        <dbReference type="SAM" id="MobiDB-lite"/>
    </source>
</evidence>
<evidence type="ECO:0000305" key="4"/>
<name>ACUK_ASPTN</name>
<feature type="chain" id="PRO_0000406435" description="Transcription activator of gluconeogenesis acuK">
    <location>
        <begin position="1"/>
        <end position="691"/>
    </location>
</feature>
<feature type="DNA-binding region" description="Zn(2)-C6 fungal-type" evidence="2">
    <location>
        <begin position="70"/>
        <end position="98"/>
    </location>
</feature>
<feature type="region of interest" description="Disordered" evidence="3">
    <location>
        <begin position="1"/>
        <end position="63"/>
    </location>
</feature>
<feature type="region of interest" description="Disordered" evidence="3">
    <location>
        <begin position="179"/>
        <end position="228"/>
    </location>
</feature>
<feature type="region of interest" description="Disordered" evidence="3">
    <location>
        <begin position="269"/>
        <end position="310"/>
    </location>
</feature>
<feature type="region of interest" description="Disordered" evidence="3">
    <location>
        <begin position="549"/>
        <end position="579"/>
    </location>
</feature>
<feature type="compositionally biased region" description="Basic and acidic residues" evidence="3">
    <location>
        <begin position="26"/>
        <end position="43"/>
    </location>
</feature>
<feature type="compositionally biased region" description="Polar residues" evidence="3">
    <location>
        <begin position="179"/>
        <end position="223"/>
    </location>
</feature>
<feature type="compositionally biased region" description="Polar residues" evidence="3">
    <location>
        <begin position="273"/>
        <end position="297"/>
    </location>
</feature>
<feature type="compositionally biased region" description="Low complexity" evidence="3">
    <location>
        <begin position="550"/>
        <end position="562"/>
    </location>
</feature>
<gene>
    <name type="primary">acuK</name>
    <name type="ORF">AN7468</name>
</gene>
<protein>
    <recommendedName>
        <fullName>Transcription activator of gluconeogenesis acuK</fullName>
    </recommendedName>
</protein>
<dbReference type="EMBL" id="CH476602">
    <property type="protein sequence ID" value="EAU33318.1"/>
    <property type="molecule type" value="Genomic_DNA"/>
</dbReference>
<dbReference type="RefSeq" id="XP_001215952.1">
    <property type="nucleotide sequence ID" value="XM_001215952.1"/>
</dbReference>
<dbReference type="SMR" id="Q0CHR0"/>
<dbReference type="STRING" id="341663.Q0CHR0"/>
<dbReference type="EnsemblFungi" id="EAU33318">
    <property type="protein sequence ID" value="EAU33318"/>
    <property type="gene ID" value="ATEG_06774"/>
</dbReference>
<dbReference type="VEuPathDB" id="FungiDB:ATEG_06774"/>
<dbReference type="eggNOG" id="ENOG502R1M5">
    <property type="taxonomic scope" value="Eukaryota"/>
</dbReference>
<dbReference type="HOGENOM" id="CLU_010748_1_0_1"/>
<dbReference type="OMA" id="VMTTCKL"/>
<dbReference type="OrthoDB" id="2538135at2759"/>
<dbReference type="Proteomes" id="UP000007963">
    <property type="component" value="Unassembled WGS sequence"/>
</dbReference>
<dbReference type="GO" id="GO:0005634">
    <property type="term" value="C:nucleus"/>
    <property type="evidence" value="ECO:0007669"/>
    <property type="project" value="UniProtKB-SubCell"/>
</dbReference>
<dbReference type="GO" id="GO:0000981">
    <property type="term" value="F:DNA-binding transcription factor activity, RNA polymerase II-specific"/>
    <property type="evidence" value="ECO:0007669"/>
    <property type="project" value="InterPro"/>
</dbReference>
<dbReference type="GO" id="GO:0000977">
    <property type="term" value="F:RNA polymerase II transcription regulatory region sequence-specific DNA binding"/>
    <property type="evidence" value="ECO:0007669"/>
    <property type="project" value="TreeGrafter"/>
</dbReference>
<dbReference type="GO" id="GO:0008270">
    <property type="term" value="F:zinc ion binding"/>
    <property type="evidence" value="ECO:0007669"/>
    <property type="project" value="InterPro"/>
</dbReference>
<dbReference type="GO" id="GO:0009267">
    <property type="term" value="P:cellular response to starvation"/>
    <property type="evidence" value="ECO:0007669"/>
    <property type="project" value="TreeGrafter"/>
</dbReference>
<dbReference type="GO" id="GO:0006094">
    <property type="term" value="P:gluconeogenesis"/>
    <property type="evidence" value="ECO:0007669"/>
    <property type="project" value="UniProtKB-KW"/>
</dbReference>
<dbReference type="GO" id="GO:0009893">
    <property type="term" value="P:positive regulation of metabolic process"/>
    <property type="evidence" value="ECO:0007669"/>
    <property type="project" value="UniProtKB-ARBA"/>
</dbReference>
<dbReference type="CDD" id="cd00067">
    <property type="entry name" value="GAL4"/>
    <property type="match status" value="1"/>
</dbReference>
<dbReference type="Gene3D" id="4.10.240.10">
    <property type="entry name" value="Zn(2)-C6 fungal-type DNA-binding domain"/>
    <property type="match status" value="1"/>
</dbReference>
<dbReference type="InterPro" id="IPR050335">
    <property type="entry name" value="ERT1_acuK_gluconeogen_tf"/>
</dbReference>
<dbReference type="InterPro" id="IPR056751">
    <property type="entry name" value="PAS_13"/>
</dbReference>
<dbReference type="InterPro" id="IPR036864">
    <property type="entry name" value="Zn2-C6_fun-type_DNA-bd_sf"/>
</dbReference>
<dbReference type="InterPro" id="IPR001138">
    <property type="entry name" value="Zn2Cys6_DnaBD"/>
</dbReference>
<dbReference type="PANTHER" id="PTHR47659:SF1">
    <property type="entry name" value="TRANSCRIPTION ACTIVATOR OF GLUCONEOGENESIS ERT1"/>
    <property type="match status" value="1"/>
</dbReference>
<dbReference type="PANTHER" id="PTHR47659">
    <property type="entry name" value="ZN(II)2CYS6 TRANSCRIPTION FACTOR (EUROFUNG)-RELATED"/>
    <property type="match status" value="1"/>
</dbReference>
<dbReference type="Pfam" id="PF24990">
    <property type="entry name" value="PAS_13"/>
    <property type="match status" value="1"/>
</dbReference>
<dbReference type="SMART" id="SM00066">
    <property type="entry name" value="GAL4"/>
    <property type="match status" value="1"/>
</dbReference>
<dbReference type="SUPFAM" id="SSF57701">
    <property type="entry name" value="Zn2/Cys6 DNA-binding domain"/>
    <property type="match status" value="1"/>
</dbReference>
<dbReference type="PROSITE" id="PS50048">
    <property type="entry name" value="ZN2_CY6_FUNGAL_2"/>
    <property type="match status" value="1"/>
</dbReference>
<keyword id="KW-0010">Activator</keyword>
<keyword id="KW-0238">DNA-binding</keyword>
<keyword id="KW-0312">Gluconeogenesis</keyword>
<keyword id="KW-0479">Metal-binding</keyword>
<keyword id="KW-0539">Nucleus</keyword>
<keyword id="KW-1185">Reference proteome</keyword>
<keyword id="KW-0804">Transcription</keyword>
<keyword id="KW-0805">Transcription regulation</keyword>
<keyword id="KW-0862">Zinc</keyword>
<sequence>MKVESRENQPSAASADRSGADQESGAAERPDPSKKTDDGKPHAPAENGQKPPSNAKDPSRPRRKKARRACFACQRAHLTCGDERPCQRCIKRGLQDACTDGVRKKAKYLHDAPDGALMPGVGGNFYSSNNNNSSMRNNLPLSRNGANAVNANAQQNTGANFYPTPQSTSYNVYQENPINQSSFTSQSPVSPTFNLKTNPTARTNSLSSVGQQPPTTTGVSGPNPQNPFAGALFDPSDPALFNFDLSSMNFENRYGALEFGMLGHMATGAGDSPSDSATQRGSMGRSGSAQFSNTPITGQPGFGESPGGQQPFMFGDPLLNEWPGGQASGQAHVNVGGVYPQSGQGSVIPGHLSKTDAPHAFTIESGPNFASPSATTSPQMTSGFDDHALNNAVAKSNGMANGQRPTISTPSLKHQSLQIGAKRRPRNPSSIYESVKEPYAYTNRFHNLTACIQRRFSPQKTLQIAKALASIRPSFIATTKTLNRDDLIFMEKCFQRTLWEYEDFINACGTPTIVCRRTGEIAAVGKEFSILTGWKKDVLLGKEPNLNVNTGGSSLPGSGTTSRSFTPRGSVGESTAPGRPQPVFLAELLDDDSVVEFYEDFARLAFGDSRGSVMTTCKLLKYKTKEDMELAQSDDNQRWNNHLRKGGIASEAGMNQLGFKDGKVECAYCWTVKRDVFDIPMLIVMNFLPCI</sequence>
<comment type="function">
    <text evidence="1">Transcription factor which regulates nonfermentable carbon utilization. Activator of gluconeogenetic genes (By similarity).</text>
</comment>
<comment type="subcellular location">
    <subcellularLocation>
        <location evidence="2">Nucleus</location>
    </subcellularLocation>
</comment>
<comment type="similarity">
    <text evidence="4">Belongs to the ERT1/acuK family.</text>
</comment>
<proteinExistence type="inferred from homology"/>
<accession>Q0CHR0</accession>